<name>CLPP_LACE2</name>
<keyword id="KW-0963">Cytoplasm</keyword>
<keyword id="KW-0378">Hydrolase</keyword>
<keyword id="KW-0645">Protease</keyword>
<keyword id="KW-1185">Reference proteome</keyword>
<keyword id="KW-0720">Serine protease</keyword>
<feature type="chain" id="PRO_1000206151" description="ATP-dependent Clp protease proteolytic subunit">
    <location>
        <begin position="1"/>
        <end position="193"/>
    </location>
</feature>
<feature type="active site" description="Nucleophile" evidence="1">
    <location>
        <position position="98"/>
    </location>
</feature>
<feature type="active site" evidence="1">
    <location>
        <position position="123"/>
    </location>
</feature>
<accession>C4Z1T6</accession>
<protein>
    <recommendedName>
        <fullName evidence="1">ATP-dependent Clp protease proteolytic subunit</fullName>
        <ecNumber evidence="1">3.4.21.92</ecNumber>
    </recommendedName>
    <alternativeName>
        <fullName evidence="1">Endopeptidase Clp</fullName>
    </alternativeName>
</protein>
<organism>
    <name type="scientific">Lachnospira eligens (strain ATCC 27750 / DSM 3376 / VPI C15-48 / C15-B4)</name>
    <name type="common">Eubacterium eligens</name>
    <dbReference type="NCBI Taxonomy" id="515620"/>
    <lineage>
        <taxon>Bacteria</taxon>
        <taxon>Bacillati</taxon>
        <taxon>Bacillota</taxon>
        <taxon>Clostridia</taxon>
        <taxon>Lachnospirales</taxon>
        <taxon>Lachnospiraceae</taxon>
        <taxon>Lachnospira</taxon>
    </lineage>
</organism>
<sequence length="193" mass="21222">MSFVPYVIEQNSRGERSYDIYSRLLKDRIIFLGEEVTDVSANLVVAQMLFLEAEDPSKDIHFYINSPGGSVSAGFAIYDTMQYIKCDVSTICIGMAASMGAFLLSGGAKGKRLALPNAEIMIHQPSGGARGQETEIRIVAENILKTRNKLNEILAANTGKSVEEISRDTERDNYMTAQEAVAYGLIDSVVEKR</sequence>
<comment type="function">
    <text evidence="1">Cleaves peptides in various proteins in a process that requires ATP hydrolysis. Has a chymotrypsin-like activity. Plays a major role in the degradation of misfolded proteins.</text>
</comment>
<comment type="catalytic activity">
    <reaction evidence="1">
        <text>Hydrolysis of proteins to small peptides in the presence of ATP and magnesium. alpha-casein is the usual test substrate. In the absence of ATP, only oligopeptides shorter than five residues are hydrolyzed (such as succinyl-Leu-Tyr-|-NHMec, and Leu-Tyr-Leu-|-Tyr-Trp, in which cleavage of the -Tyr-|-Leu- and -Tyr-|-Trp bonds also occurs).</text>
        <dbReference type="EC" id="3.4.21.92"/>
    </reaction>
</comment>
<comment type="subunit">
    <text evidence="1">Fourteen ClpP subunits assemble into 2 heptameric rings which stack back to back to give a disk-like structure with a central cavity, resembling the structure of eukaryotic proteasomes.</text>
</comment>
<comment type="subcellular location">
    <subcellularLocation>
        <location evidence="1">Cytoplasm</location>
    </subcellularLocation>
</comment>
<comment type="similarity">
    <text evidence="1">Belongs to the peptidase S14 family.</text>
</comment>
<proteinExistence type="inferred from homology"/>
<evidence type="ECO:0000255" key="1">
    <source>
        <dbReference type="HAMAP-Rule" id="MF_00444"/>
    </source>
</evidence>
<reference key="1">
    <citation type="journal article" date="2009" name="Proc. Natl. Acad. Sci. U.S.A.">
        <title>Characterizing a model human gut microbiota composed of members of its two dominant bacterial phyla.</title>
        <authorList>
            <person name="Mahowald M.A."/>
            <person name="Rey F.E."/>
            <person name="Seedorf H."/>
            <person name="Turnbaugh P.J."/>
            <person name="Fulton R.S."/>
            <person name="Wollam A."/>
            <person name="Shah N."/>
            <person name="Wang C."/>
            <person name="Magrini V."/>
            <person name="Wilson R.K."/>
            <person name="Cantarel B.L."/>
            <person name="Coutinho P.M."/>
            <person name="Henrissat B."/>
            <person name="Crock L.W."/>
            <person name="Russell A."/>
            <person name="Verberkmoes N.C."/>
            <person name="Hettich R.L."/>
            <person name="Gordon J.I."/>
        </authorList>
    </citation>
    <scope>NUCLEOTIDE SEQUENCE [LARGE SCALE GENOMIC DNA]</scope>
    <source>
        <strain>ATCC 27750 / DSM 3376 / VPI C15-48 / C15-B4</strain>
    </source>
</reference>
<gene>
    <name evidence="1" type="primary">clpP</name>
    <name type="ordered locus">EUBELI_01454</name>
</gene>
<dbReference type="EC" id="3.4.21.92" evidence="1"/>
<dbReference type="EMBL" id="CP001104">
    <property type="protein sequence ID" value="ACR72447.1"/>
    <property type="molecule type" value="Genomic_DNA"/>
</dbReference>
<dbReference type="RefSeq" id="WP_012739682.1">
    <property type="nucleotide sequence ID" value="NC_012778.1"/>
</dbReference>
<dbReference type="SMR" id="C4Z1T6"/>
<dbReference type="STRING" id="515620.EUBELI_01454"/>
<dbReference type="MEROPS" id="S14.001"/>
<dbReference type="GeneID" id="41356155"/>
<dbReference type="KEGG" id="eel:EUBELI_01454"/>
<dbReference type="eggNOG" id="COG0740">
    <property type="taxonomic scope" value="Bacteria"/>
</dbReference>
<dbReference type="HOGENOM" id="CLU_058707_3_2_9"/>
<dbReference type="Proteomes" id="UP000001476">
    <property type="component" value="Chromosome"/>
</dbReference>
<dbReference type="GO" id="GO:0005737">
    <property type="term" value="C:cytoplasm"/>
    <property type="evidence" value="ECO:0007669"/>
    <property type="project" value="UniProtKB-SubCell"/>
</dbReference>
<dbReference type="GO" id="GO:0009368">
    <property type="term" value="C:endopeptidase Clp complex"/>
    <property type="evidence" value="ECO:0007669"/>
    <property type="project" value="TreeGrafter"/>
</dbReference>
<dbReference type="GO" id="GO:0004176">
    <property type="term" value="F:ATP-dependent peptidase activity"/>
    <property type="evidence" value="ECO:0007669"/>
    <property type="project" value="InterPro"/>
</dbReference>
<dbReference type="GO" id="GO:0051117">
    <property type="term" value="F:ATPase binding"/>
    <property type="evidence" value="ECO:0007669"/>
    <property type="project" value="TreeGrafter"/>
</dbReference>
<dbReference type="GO" id="GO:0004252">
    <property type="term" value="F:serine-type endopeptidase activity"/>
    <property type="evidence" value="ECO:0007669"/>
    <property type="project" value="UniProtKB-UniRule"/>
</dbReference>
<dbReference type="GO" id="GO:0006515">
    <property type="term" value="P:protein quality control for misfolded or incompletely synthesized proteins"/>
    <property type="evidence" value="ECO:0007669"/>
    <property type="project" value="TreeGrafter"/>
</dbReference>
<dbReference type="CDD" id="cd07017">
    <property type="entry name" value="S14_ClpP_2"/>
    <property type="match status" value="1"/>
</dbReference>
<dbReference type="FunFam" id="3.90.226.10:FF:000001">
    <property type="entry name" value="ATP-dependent Clp protease proteolytic subunit"/>
    <property type="match status" value="1"/>
</dbReference>
<dbReference type="Gene3D" id="3.90.226.10">
    <property type="entry name" value="2-enoyl-CoA Hydratase, Chain A, domain 1"/>
    <property type="match status" value="1"/>
</dbReference>
<dbReference type="HAMAP" id="MF_00444">
    <property type="entry name" value="ClpP"/>
    <property type="match status" value="1"/>
</dbReference>
<dbReference type="InterPro" id="IPR001907">
    <property type="entry name" value="ClpP"/>
</dbReference>
<dbReference type="InterPro" id="IPR029045">
    <property type="entry name" value="ClpP/crotonase-like_dom_sf"/>
</dbReference>
<dbReference type="InterPro" id="IPR023562">
    <property type="entry name" value="ClpP/TepA"/>
</dbReference>
<dbReference type="InterPro" id="IPR033135">
    <property type="entry name" value="ClpP_His_AS"/>
</dbReference>
<dbReference type="InterPro" id="IPR018215">
    <property type="entry name" value="ClpP_Ser_AS"/>
</dbReference>
<dbReference type="NCBIfam" id="TIGR00493">
    <property type="entry name" value="clpP"/>
    <property type="match status" value="1"/>
</dbReference>
<dbReference type="NCBIfam" id="NF001368">
    <property type="entry name" value="PRK00277.1"/>
    <property type="match status" value="1"/>
</dbReference>
<dbReference type="NCBIfam" id="NF009205">
    <property type="entry name" value="PRK12553.1"/>
    <property type="match status" value="1"/>
</dbReference>
<dbReference type="PANTHER" id="PTHR10381">
    <property type="entry name" value="ATP-DEPENDENT CLP PROTEASE PROTEOLYTIC SUBUNIT"/>
    <property type="match status" value="1"/>
</dbReference>
<dbReference type="PANTHER" id="PTHR10381:SF70">
    <property type="entry name" value="ATP-DEPENDENT CLP PROTEASE PROTEOLYTIC SUBUNIT"/>
    <property type="match status" value="1"/>
</dbReference>
<dbReference type="Pfam" id="PF00574">
    <property type="entry name" value="CLP_protease"/>
    <property type="match status" value="1"/>
</dbReference>
<dbReference type="PRINTS" id="PR00127">
    <property type="entry name" value="CLPPROTEASEP"/>
</dbReference>
<dbReference type="SUPFAM" id="SSF52096">
    <property type="entry name" value="ClpP/crotonase"/>
    <property type="match status" value="1"/>
</dbReference>
<dbReference type="PROSITE" id="PS00382">
    <property type="entry name" value="CLP_PROTEASE_HIS"/>
    <property type="match status" value="1"/>
</dbReference>
<dbReference type="PROSITE" id="PS00381">
    <property type="entry name" value="CLP_PROTEASE_SER"/>
    <property type="match status" value="1"/>
</dbReference>